<feature type="chain" id="PRO_0000243868" description="Small ribosomal subunit protein bS16">
    <location>
        <begin position="1"/>
        <end position="82"/>
    </location>
</feature>
<gene>
    <name evidence="1" type="primary">rpsP</name>
    <name type="ordered locus">SPA2535</name>
</gene>
<comment type="similarity">
    <text evidence="1">Belongs to the bacterial ribosomal protein bS16 family.</text>
</comment>
<sequence>MVTIRLARHGAKKRPFYQVVVTDSRNARNGRFIERVGFFNPIASEKEEGTRLDLDRIAHWVGQGATISDRVAALIKEVKKAA</sequence>
<reference key="1">
    <citation type="journal article" date="2004" name="Nat. Genet.">
        <title>Comparison of genome degradation in Paratyphi A and Typhi, human-restricted serovars of Salmonella enterica that cause typhoid.</title>
        <authorList>
            <person name="McClelland M."/>
            <person name="Sanderson K.E."/>
            <person name="Clifton S.W."/>
            <person name="Latreille P."/>
            <person name="Porwollik S."/>
            <person name="Sabo A."/>
            <person name="Meyer R."/>
            <person name="Bieri T."/>
            <person name="Ozersky P."/>
            <person name="McLellan M."/>
            <person name="Harkins C.R."/>
            <person name="Wang C."/>
            <person name="Nguyen C."/>
            <person name="Berghoff A."/>
            <person name="Elliott G."/>
            <person name="Kohlberg S."/>
            <person name="Strong C."/>
            <person name="Du F."/>
            <person name="Carter J."/>
            <person name="Kremizki C."/>
            <person name="Layman D."/>
            <person name="Leonard S."/>
            <person name="Sun H."/>
            <person name="Fulton L."/>
            <person name="Nash W."/>
            <person name="Miner T."/>
            <person name="Minx P."/>
            <person name="Delehaunty K."/>
            <person name="Fronick C."/>
            <person name="Magrini V."/>
            <person name="Nhan M."/>
            <person name="Warren W."/>
            <person name="Florea L."/>
            <person name="Spieth J."/>
            <person name="Wilson R.K."/>
        </authorList>
    </citation>
    <scope>NUCLEOTIDE SEQUENCE [LARGE SCALE GENOMIC DNA]</scope>
    <source>
        <strain>ATCC 9150 / SARB42</strain>
    </source>
</reference>
<dbReference type="EMBL" id="CP000026">
    <property type="protein sequence ID" value="AAV78404.1"/>
    <property type="molecule type" value="Genomic_DNA"/>
</dbReference>
<dbReference type="RefSeq" id="WP_000256453.1">
    <property type="nucleotide sequence ID" value="NC_006511.1"/>
</dbReference>
<dbReference type="SMR" id="Q5PFF6"/>
<dbReference type="KEGG" id="spt:SPA2535"/>
<dbReference type="HOGENOM" id="CLU_100590_5_1_6"/>
<dbReference type="Proteomes" id="UP000008185">
    <property type="component" value="Chromosome"/>
</dbReference>
<dbReference type="GO" id="GO:0005737">
    <property type="term" value="C:cytoplasm"/>
    <property type="evidence" value="ECO:0007669"/>
    <property type="project" value="UniProtKB-ARBA"/>
</dbReference>
<dbReference type="GO" id="GO:0015935">
    <property type="term" value="C:small ribosomal subunit"/>
    <property type="evidence" value="ECO:0007669"/>
    <property type="project" value="TreeGrafter"/>
</dbReference>
<dbReference type="GO" id="GO:0003735">
    <property type="term" value="F:structural constituent of ribosome"/>
    <property type="evidence" value="ECO:0007669"/>
    <property type="project" value="InterPro"/>
</dbReference>
<dbReference type="GO" id="GO:0006412">
    <property type="term" value="P:translation"/>
    <property type="evidence" value="ECO:0007669"/>
    <property type="project" value="UniProtKB-UniRule"/>
</dbReference>
<dbReference type="FunFam" id="3.30.1320.10:FF:000001">
    <property type="entry name" value="30S ribosomal protein S16"/>
    <property type="match status" value="1"/>
</dbReference>
<dbReference type="Gene3D" id="3.30.1320.10">
    <property type="match status" value="1"/>
</dbReference>
<dbReference type="HAMAP" id="MF_00385">
    <property type="entry name" value="Ribosomal_bS16"/>
    <property type="match status" value="1"/>
</dbReference>
<dbReference type="InterPro" id="IPR000307">
    <property type="entry name" value="Ribosomal_bS16"/>
</dbReference>
<dbReference type="InterPro" id="IPR020592">
    <property type="entry name" value="Ribosomal_bS16_CS"/>
</dbReference>
<dbReference type="InterPro" id="IPR023803">
    <property type="entry name" value="Ribosomal_bS16_dom_sf"/>
</dbReference>
<dbReference type="NCBIfam" id="TIGR00002">
    <property type="entry name" value="S16"/>
    <property type="match status" value="1"/>
</dbReference>
<dbReference type="PANTHER" id="PTHR12919">
    <property type="entry name" value="30S RIBOSOMAL PROTEIN S16"/>
    <property type="match status" value="1"/>
</dbReference>
<dbReference type="PANTHER" id="PTHR12919:SF20">
    <property type="entry name" value="SMALL RIBOSOMAL SUBUNIT PROTEIN BS16M"/>
    <property type="match status" value="1"/>
</dbReference>
<dbReference type="Pfam" id="PF00886">
    <property type="entry name" value="Ribosomal_S16"/>
    <property type="match status" value="1"/>
</dbReference>
<dbReference type="SUPFAM" id="SSF54565">
    <property type="entry name" value="Ribosomal protein S16"/>
    <property type="match status" value="1"/>
</dbReference>
<dbReference type="PROSITE" id="PS00732">
    <property type="entry name" value="RIBOSOMAL_S16"/>
    <property type="match status" value="1"/>
</dbReference>
<accession>Q5PFF6</accession>
<proteinExistence type="inferred from homology"/>
<keyword id="KW-0687">Ribonucleoprotein</keyword>
<keyword id="KW-0689">Ribosomal protein</keyword>
<evidence type="ECO:0000255" key="1">
    <source>
        <dbReference type="HAMAP-Rule" id="MF_00385"/>
    </source>
</evidence>
<evidence type="ECO:0000305" key="2"/>
<organism>
    <name type="scientific">Salmonella paratyphi A (strain ATCC 9150 / SARB42)</name>
    <dbReference type="NCBI Taxonomy" id="295319"/>
    <lineage>
        <taxon>Bacteria</taxon>
        <taxon>Pseudomonadati</taxon>
        <taxon>Pseudomonadota</taxon>
        <taxon>Gammaproteobacteria</taxon>
        <taxon>Enterobacterales</taxon>
        <taxon>Enterobacteriaceae</taxon>
        <taxon>Salmonella</taxon>
    </lineage>
</organism>
<protein>
    <recommendedName>
        <fullName evidence="1">Small ribosomal subunit protein bS16</fullName>
    </recommendedName>
    <alternativeName>
        <fullName evidence="2">30S ribosomal protein S16</fullName>
    </alternativeName>
</protein>
<name>RS16_SALPA</name>